<proteinExistence type="inferred from homology"/>
<gene>
    <name evidence="1" type="primary">atpA</name>
    <name type="ordered locus">MmarC7_0298</name>
</gene>
<reference key="1">
    <citation type="submission" date="2007-06" db="EMBL/GenBank/DDBJ databases">
        <title>Complete sequence of Methanococcus maripaludis C7.</title>
        <authorList>
            <consortium name="US DOE Joint Genome Institute"/>
            <person name="Copeland A."/>
            <person name="Lucas S."/>
            <person name="Lapidus A."/>
            <person name="Barry K."/>
            <person name="Glavina del Rio T."/>
            <person name="Dalin E."/>
            <person name="Tice H."/>
            <person name="Pitluck S."/>
            <person name="Clum A."/>
            <person name="Schmutz J."/>
            <person name="Larimer F."/>
            <person name="Land M."/>
            <person name="Hauser L."/>
            <person name="Kyrpides N."/>
            <person name="Anderson I."/>
            <person name="Sieprawska-Lupa M."/>
            <person name="Whitman W.B."/>
            <person name="Richardson P."/>
        </authorList>
    </citation>
    <scope>NUCLEOTIDE SEQUENCE [LARGE SCALE GENOMIC DNA]</scope>
    <source>
        <strain>C7 / ATCC BAA-1331</strain>
    </source>
</reference>
<accession>A6VFZ2</accession>
<comment type="function">
    <text evidence="1">Component of the A-type ATP synthase that produces ATP from ADP in the presence of a proton gradient across the membrane. The A chain is the catalytic subunit.</text>
</comment>
<comment type="catalytic activity">
    <reaction evidence="1">
        <text>ATP + H2O + 4 H(+)(in) = ADP + phosphate + 5 H(+)(out)</text>
        <dbReference type="Rhea" id="RHEA:57720"/>
        <dbReference type="ChEBI" id="CHEBI:15377"/>
        <dbReference type="ChEBI" id="CHEBI:15378"/>
        <dbReference type="ChEBI" id="CHEBI:30616"/>
        <dbReference type="ChEBI" id="CHEBI:43474"/>
        <dbReference type="ChEBI" id="CHEBI:456216"/>
        <dbReference type="EC" id="7.1.2.2"/>
    </reaction>
</comment>
<comment type="subunit">
    <text evidence="1">Has multiple subunits with at least A(3), B(3), C, D, E, F, H, I and proteolipid K(x).</text>
</comment>
<comment type="subcellular location">
    <subcellularLocation>
        <location evidence="1">Cell membrane</location>
        <topology evidence="1">Peripheral membrane protein</topology>
    </subcellularLocation>
</comment>
<comment type="similarity">
    <text evidence="1">Belongs to the ATPase alpha/beta chains family.</text>
</comment>
<feature type="chain" id="PRO_0000322475" description="A-type ATP synthase subunit A">
    <location>
        <begin position="1"/>
        <end position="586"/>
    </location>
</feature>
<feature type="binding site" evidence="1">
    <location>
        <begin position="232"/>
        <end position="239"/>
    </location>
    <ligand>
        <name>ATP</name>
        <dbReference type="ChEBI" id="CHEBI:30616"/>
    </ligand>
</feature>
<protein>
    <recommendedName>
        <fullName evidence="1">A-type ATP synthase subunit A</fullName>
        <ecNumber evidence="1">7.1.2.2</ecNumber>
    </recommendedName>
</protein>
<keyword id="KW-0066">ATP synthesis</keyword>
<keyword id="KW-0067">ATP-binding</keyword>
<keyword id="KW-1003">Cell membrane</keyword>
<keyword id="KW-0375">Hydrogen ion transport</keyword>
<keyword id="KW-0406">Ion transport</keyword>
<keyword id="KW-0472">Membrane</keyword>
<keyword id="KW-0547">Nucleotide-binding</keyword>
<keyword id="KW-1278">Translocase</keyword>
<keyword id="KW-0813">Transport</keyword>
<evidence type="ECO:0000255" key="1">
    <source>
        <dbReference type="HAMAP-Rule" id="MF_00309"/>
    </source>
</evidence>
<sequence length="586" mass="64198">MVVGKIIKISGPVVVAEGMKGSQMFEVVKVGNEGLTGEIIQLTEDEAIIQVYEETAGIKPGEGVTGTGAPLSVELGPGMLKAMYDGIQRPLNEIENATDSIYIPRGVSVPSISRVIKWDFEPTAAVGDEVITGDVIGTVQETASIVHKIMIPFGVSGKIKEIKSGSFTVEETVAVVETADGEKEIQMMQKWPVRKPRPSKGKQAPVIPLITGQRVEDTFFGLAKGGASAIPGPFGSGKTVTQHQLAKWSDVDVVVYIGCGERGNEMTEVIEEFPHLDDIKTGNKLMDRTVLIANTSNMPVAAREASVYTGITIAEYFRDQGLGVLLTADSTSRWAEAMREISGRLEEMPGEEGYPAYLSSKLAQFYERAGRVECLGSENKQGFVCIVGAVSPPGGDFSEPVTSNTLRIVKVFWALDANLARRRHFPAINWLTSYSLYIDDIAGWWQQNTAADWRSLRDEAMSLLQKEAELQEIVQLVGPDALPDRERVILEIARMLREDFLQQDAYHEVDSYCSPIKQYHMLKIIMTFYKKGLDAVAKGADPAGISAVTVKGDIARMKYLVEEEFVNTKVPEIINKMESELGALIK</sequence>
<dbReference type="EC" id="7.1.2.2" evidence="1"/>
<dbReference type="EMBL" id="CP000745">
    <property type="protein sequence ID" value="ABR65368.1"/>
    <property type="molecule type" value="Genomic_DNA"/>
</dbReference>
<dbReference type="SMR" id="A6VFZ2"/>
<dbReference type="STRING" id="426368.MmarC7_0298"/>
<dbReference type="KEGG" id="mmz:MmarC7_0298"/>
<dbReference type="eggNOG" id="arCOG00868">
    <property type="taxonomic scope" value="Archaea"/>
</dbReference>
<dbReference type="HOGENOM" id="CLU_008162_3_1_2"/>
<dbReference type="OrthoDB" id="115235at2157"/>
<dbReference type="GO" id="GO:0005886">
    <property type="term" value="C:plasma membrane"/>
    <property type="evidence" value="ECO:0007669"/>
    <property type="project" value="UniProtKB-SubCell"/>
</dbReference>
<dbReference type="GO" id="GO:0033178">
    <property type="term" value="C:proton-transporting two-sector ATPase complex, catalytic domain"/>
    <property type="evidence" value="ECO:0007669"/>
    <property type="project" value="InterPro"/>
</dbReference>
<dbReference type="GO" id="GO:0005524">
    <property type="term" value="F:ATP binding"/>
    <property type="evidence" value="ECO:0007669"/>
    <property type="project" value="UniProtKB-UniRule"/>
</dbReference>
<dbReference type="GO" id="GO:0046933">
    <property type="term" value="F:proton-transporting ATP synthase activity, rotational mechanism"/>
    <property type="evidence" value="ECO:0007669"/>
    <property type="project" value="UniProtKB-UniRule"/>
</dbReference>
<dbReference type="GO" id="GO:0046961">
    <property type="term" value="F:proton-transporting ATPase activity, rotational mechanism"/>
    <property type="evidence" value="ECO:0007669"/>
    <property type="project" value="InterPro"/>
</dbReference>
<dbReference type="GO" id="GO:0042777">
    <property type="term" value="P:proton motive force-driven plasma membrane ATP synthesis"/>
    <property type="evidence" value="ECO:0007669"/>
    <property type="project" value="UniProtKB-UniRule"/>
</dbReference>
<dbReference type="CDD" id="cd18111">
    <property type="entry name" value="ATP-synt_V_A-type_alpha_C"/>
    <property type="match status" value="1"/>
</dbReference>
<dbReference type="CDD" id="cd18119">
    <property type="entry name" value="ATP-synt_V_A-type_alpha_N"/>
    <property type="match status" value="1"/>
</dbReference>
<dbReference type="CDD" id="cd01134">
    <property type="entry name" value="V_A-ATPase_A"/>
    <property type="match status" value="1"/>
</dbReference>
<dbReference type="FunFam" id="1.10.1140.10:FF:000002">
    <property type="entry name" value="V-type proton ATPase catalytic subunit A"/>
    <property type="match status" value="1"/>
</dbReference>
<dbReference type="FunFam" id="2.40.30.20:FF:000002">
    <property type="entry name" value="V-type proton ATPase catalytic subunit A"/>
    <property type="match status" value="1"/>
</dbReference>
<dbReference type="FunFam" id="2.40.50.100:FF:000008">
    <property type="entry name" value="V-type proton ATPase catalytic subunit A"/>
    <property type="match status" value="1"/>
</dbReference>
<dbReference type="Gene3D" id="2.40.30.20">
    <property type="match status" value="1"/>
</dbReference>
<dbReference type="Gene3D" id="2.40.50.100">
    <property type="match status" value="1"/>
</dbReference>
<dbReference type="Gene3D" id="1.10.1140.10">
    <property type="entry name" value="Bovine Mitochondrial F1-atpase, Atp Synthase Beta Chain, Chain D, domain 3"/>
    <property type="match status" value="1"/>
</dbReference>
<dbReference type="Gene3D" id="3.40.50.300">
    <property type="entry name" value="P-loop containing nucleotide triphosphate hydrolases"/>
    <property type="match status" value="1"/>
</dbReference>
<dbReference type="HAMAP" id="MF_00309">
    <property type="entry name" value="ATP_synth_A_arch"/>
    <property type="match status" value="1"/>
</dbReference>
<dbReference type="InterPro" id="IPR055190">
    <property type="entry name" value="ATP-synt_VA_C"/>
</dbReference>
<dbReference type="InterPro" id="IPR031686">
    <property type="entry name" value="ATP-synth_a_Xtn"/>
</dbReference>
<dbReference type="InterPro" id="IPR023366">
    <property type="entry name" value="ATP_synth_asu-like_sf"/>
</dbReference>
<dbReference type="InterPro" id="IPR005726">
    <property type="entry name" value="ATP_synth_asu_arc"/>
</dbReference>
<dbReference type="InterPro" id="IPR020003">
    <property type="entry name" value="ATPase_a/bsu_AS"/>
</dbReference>
<dbReference type="InterPro" id="IPR004100">
    <property type="entry name" value="ATPase_F1/V1/A1_a/bsu_N"/>
</dbReference>
<dbReference type="InterPro" id="IPR036121">
    <property type="entry name" value="ATPase_F1/V1/A1_a/bsu_N_sf"/>
</dbReference>
<dbReference type="InterPro" id="IPR000194">
    <property type="entry name" value="ATPase_F1/V1/A1_a/bsu_nucl-bd"/>
</dbReference>
<dbReference type="InterPro" id="IPR024034">
    <property type="entry name" value="ATPase_F1/V1_b/a_C"/>
</dbReference>
<dbReference type="InterPro" id="IPR027417">
    <property type="entry name" value="P-loop_NTPase"/>
</dbReference>
<dbReference type="InterPro" id="IPR022878">
    <property type="entry name" value="V-ATPase_asu"/>
</dbReference>
<dbReference type="NCBIfam" id="TIGR01043">
    <property type="entry name" value="ATP_syn_A_arch"/>
    <property type="match status" value="1"/>
</dbReference>
<dbReference type="NCBIfam" id="NF003220">
    <property type="entry name" value="PRK04192.1"/>
    <property type="match status" value="1"/>
</dbReference>
<dbReference type="PANTHER" id="PTHR43607:SF1">
    <property type="entry name" value="H(+)-TRANSPORTING TWO-SECTOR ATPASE"/>
    <property type="match status" value="1"/>
</dbReference>
<dbReference type="PANTHER" id="PTHR43607">
    <property type="entry name" value="V-TYPE PROTON ATPASE CATALYTIC SUBUNIT A"/>
    <property type="match status" value="1"/>
</dbReference>
<dbReference type="Pfam" id="PF00006">
    <property type="entry name" value="ATP-synt_ab"/>
    <property type="match status" value="1"/>
</dbReference>
<dbReference type="Pfam" id="PF02874">
    <property type="entry name" value="ATP-synt_ab_N"/>
    <property type="match status" value="1"/>
</dbReference>
<dbReference type="Pfam" id="PF16886">
    <property type="entry name" value="ATP-synt_ab_Xtn"/>
    <property type="match status" value="1"/>
</dbReference>
<dbReference type="Pfam" id="PF22919">
    <property type="entry name" value="ATP-synt_VA_C"/>
    <property type="match status" value="1"/>
</dbReference>
<dbReference type="SUPFAM" id="SSF47917">
    <property type="entry name" value="C-terminal domain of alpha and beta subunits of F1 ATP synthase"/>
    <property type="match status" value="1"/>
</dbReference>
<dbReference type="SUPFAM" id="SSF50615">
    <property type="entry name" value="N-terminal domain of alpha and beta subunits of F1 ATP synthase"/>
    <property type="match status" value="1"/>
</dbReference>
<dbReference type="SUPFAM" id="SSF52540">
    <property type="entry name" value="P-loop containing nucleoside triphosphate hydrolases"/>
    <property type="match status" value="1"/>
</dbReference>
<dbReference type="PROSITE" id="PS00152">
    <property type="entry name" value="ATPASE_ALPHA_BETA"/>
    <property type="match status" value="1"/>
</dbReference>
<organism>
    <name type="scientific">Methanococcus maripaludis (strain C7 / ATCC BAA-1331)</name>
    <dbReference type="NCBI Taxonomy" id="426368"/>
    <lineage>
        <taxon>Archaea</taxon>
        <taxon>Methanobacteriati</taxon>
        <taxon>Methanobacteriota</taxon>
        <taxon>Methanomada group</taxon>
        <taxon>Methanococci</taxon>
        <taxon>Methanococcales</taxon>
        <taxon>Methanococcaceae</taxon>
        <taxon>Methanococcus</taxon>
    </lineage>
</organism>
<name>AATA_METM7</name>